<gene>
    <name evidence="1" type="primary">dapA</name>
    <name type="ordered locus">LBJ_0896</name>
</gene>
<dbReference type="EC" id="4.3.3.7" evidence="1"/>
<dbReference type="EMBL" id="CP000350">
    <property type="protein sequence ID" value="ABJ75540.1"/>
    <property type="molecule type" value="Genomic_DNA"/>
</dbReference>
<dbReference type="SMR" id="Q04U80"/>
<dbReference type="KEGG" id="lbj:LBJ_0896"/>
<dbReference type="HOGENOM" id="CLU_049343_7_1_12"/>
<dbReference type="UniPathway" id="UPA00034">
    <property type="reaction ID" value="UER00017"/>
</dbReference>
<dbReference type="Proteomes" id="UP000000656">
    <property type="component" value="Chromosome 1"/>
</dbReference>
<dbReference type="GO" id="GO:0005829">
    <property type="term" value="C:cytosol"/>
    <property type="evidence" value="ECO:0007669"/>
    <property type="project" value="TreeGrafter"/>
</dbReference>
<dbReference type="GO" id="GO:0008840">
    <property type="term" value="F:4-hydroxy-tetrahydrodipicolinate synthase activity"/>
    <property type="evidence" value="ECO:0007669"/>
    <property type="project" value="UniProtKB-UniRule"/>
</dbReference>
<dbReference type="GO" id="GO:0019877">
    <property type="term" value="P:diaminopimelate biosynthetic process"/>
    <property type="evidence" value="ECO:0007669"/>
    <property type="project" value="UniProtKB-UniRule"/>
</dbReference>
<dbReference type="GO" id="GO:0009089">
    <property type="term" value="P:lysine biosynthetic process via diaminopimelate"/>
    <property type="evidence" value="ECO:0007669"/>
    <property type="project" value="UniProtKB-UniRule"/>
</dbReference>
<dbReference type="CDD" id="cd00950">
    <property type="entry name" value="DHDPS"/>
    <property type="match status" value="1"/>
</dbReference>
<dbReference type="Gene3D" id="3.20.20.70">
    <property type="entry name" value="Aldolase class I"/>
    <property type="match status" value="1"/>
</dbReference>
<dbReference type="HAMAP" id="MF_00418">
    <property type="entry name" value="DapA"/>
    <property type="match status" value="1"/>
</dbReference>
<dbReference type="InterPro" id="IPR013785">
    <property type="entry name" value="Aldolase_TIM"/>
</dbReference>
<dbReference type="InterPro" id="IPR005263">
    <property type="entry name" value="DapA"/>
</dbReference>
<dbReference type="InterPro" id="IPR002220">
    <property type="entry name" value="DapA-like"/>
</dbReference>
<dbReference type="InterPro" id="IPR020625">
    <property type="entry name" value="Schiff_base-form_aldolases_AS"/>
</dbReference>
<dbReference type="InterPro" id="IPR020624">
    <property type="entry name" value="Schiff_base-form_aldolases_CS"/>
</dbReference>
<dbReference type="NCBIfam" id="TIGR00674">
    <property type="entry name" value="dapA"/>
    <property type="match status" value="1"/>
</dbReference>
<dbReference type="PANTHER" id="PTHR12128:SF66">
    <property type="entry name" value="4-HYDROXY-2-OXOGLUTARATE ALDOLASE, MITOCHONDRIAL"/>
    <property type="match status" value="1"/>
</dbReference>
<dbReference type="PANTHER" id="PTHR12128">
    <property type="entry name" value="DIHYDRODIPICOLINATE SYNTHASE"/>
    <property type="match status" value="1"/>
</dbReference>
<dbReference type="Pfam" id="PF00701">
    <property type="entry name" value="DHDPS"/>
    <property type="match status" value="1"/>
</dbReference>
<dbReference type="PIRSF" id="PIRSF001365">
    <property type="entry name" value="DHDPS"/>
    <property type="match status" value="1"/>
</dbReference>
<dbReference type="PRINTS" id="PR00146">
    <property type="entry name" value="DHPICSNTHASE"/>
</dbReference>
<dbReference type="SMART" id="SM01130">
    <property type="entry name" value="DHDPS"/>
    <property type="match status" value="1"/>
</dbReference>
<dbReference type="SUPFAM" id="SSF51569">
    <property type="entry name" value="Aldolase"/>
    <property type="match status" value="1"/>
</dbReference>
<dbReference type="PROSITE" id="PS00665">
    <property type="entry name" value="DHDPS_1"/>
    <property type="match status" value="1"/>
</dbReference>
<dbReference type="PROSITE" id="PS00666">
    <property type="entry name" value="DHDPS_2"/>
    <property type="match status" value="1"/>
</dbReference>
<name>DAPA_LEPBJ</name>
<evidence type="ECO:0000255" key="1">
    <source>
        <dbReference type="HAMAP-Rule" id="MF_00418"/>
    </source>
</evidence>
<evidence type="ECO:0000305" key="2"/>
<proteinExistence type="inferred from homology"/>
<organism>
    <name type="scientific">Leptospira borgpetersenii serovar Hardjo-bovis (strain JB197)</name>
    <dbReference type="NCBI Taxonomy" id="355277"/>
    <lineage>
        <taxon>Bacteria</taxon>
        <taxon>Pseudomonadati</taxon>
        <taxon>Spirochaetota</taxon>
        <taxon>Spirochaetia</taxon>
        <taxon>Leptospirales</taxon>
        <taxon>Leptospiraceae</taxon>
        <taxon>Leptospira</taxon>
    </lineage>
</organism>
<feature type="chain" id="PRO_1000050207" description="4-hydroxy-tetrahydrodipicolinate synthase">
    <location>
        <begin position="1"/>
        <end position="294"/>
    </location>
</feature>
<feature type="active site" description="Proton donor/acceptor" evidence="1">
    <location>
        <position position="132"/>
    </location>
</feature>
<feature type="active site" description="Schiff-base intermediate with substrate" evidence="1">
    <location>
        <position position="160"/>
    </location>
</feature>
<feature type="binding site" evidence="1">
    <location>
        <position position="44"/>
    </location>
    <ligand>
        <name>pyruvate</name>
        <dbReference type="ChEBI" id="CHEBI:15361"/>
    </ligand>
</feature>
<feature type="binding site" evidence="1">
    <location>
        <position position="202"/>
    </location>
    <ligand>
        <name>pyruvate</name>
        <dbReference type="ChEBI" id="CHEBI:15361"/>
    </ligand>
</feature>
<feature type="site" description="Part of a proton relay during catalysis" evidence="1">
    <location>
        <position position="43"/>
    </location>
</feature>
<feature type="site" description="Part of a proton relay during catalysis" evidence="1">
    <location>
        <position position="106"/>
    </location>
</feature>
<sequence>MFQGVYTAIITPFKNDKIDYDSYNKLLEKQIKAGVNGVVPCGTTGESPTLSHTEHAELIRETVKAVQGKIQVVAGTGSNSTREAIELTEAACKDSVDGILSVNPYYNKPTQEGLFQHFQAVAEHSSVPVMLYNIPGRTSINLQPETVFRLSEIKRIRSMKEATGDLGQMGKLISLVGNKMTVLSGDDNLTLPLLAIGGVGVVSVVSNLFPKAMVEMVKYFQDGKVIEARKIHYDFIEAFALAFMETNPIPIKAAMSWFGHCEPEIRLPLTRLSQNETSVKFKKALEVLKEKGYE</sequence>
<comment type="function">
    <text evidence="1">Catalyzes the condensation of (S)-aspartate-beta-semialdehyde [(S)-ASA] and pyruvate to 4-hydroxy-tetrahydrodipicolinate (HTPA).</text>
</comment>
<comment type="catalytic activity">
    <reaction evidence="1">
        <text>L-aspartate 4-semialdehyde + pyruvate = (2S,4S)-4-hydroxy-2,3,4,5-tetrahydrodipicolinate + H2O + H(+)</text>
        <dbReference type="Rhea" id="RHEA:34171"/>
        <dbReference type="ChEBI" id="CHEBI:15361"/>
        <dbReference type="ChEBI" id="CHEBI:15377"/>
        <dbReference type="ChEBI" id="CHEBI:15378"/>
        <dbReference type="ChEBI" id="CHEBI:67139"/>
        <dbReference type="ChEBI" id="CHEBI:537519"/>
        <dbReference type="EC" id="4.3.3.7"/>
    </reaction>
</comment>
<comment type="pathway">
    <text evidence="1">Amino-acid biosynthesis; L-lysine biosynthesis via DAP pathway; (S)-tetrahydrodipicolinate from L-aspartate: step 3/4.</text>
</comment>
<comment type="subunit">
    <text evidence="1">Homotetramer; dimer of dimers.</text>
</comment>
<comment type="subcellular location">
    <subcellularLocation>
        <location evidence="1">Cytoplasm</location>
    </subcellularLocation>
</comment>
<comment type="similarity">
    <text evidence="1">Belongs to the DapA family.</text>
</comment>
<comment type="caution">
    <text evidence="2">Was originally thought to be a dihydrodipicolinate synthase (DHDPS), catalyzing the condensation of (S)-aspartate-beta-semialdehyde [(S)-ASA] and pyruvate to dihydrodipicolinate (DHDP). However, it was shown in E.coli that the product of the enzymatic reaction is not dihydrodipicolinate but in fact (4S)-4-hydroxy-2,3,4,5-tetrahydro-(2S)-dipicolinic acid (HTPA), and that the consecutive dehydration reaction leading to DHDP is not spontaneous but catalyzed by DapB.</text>
</comment>
<reference key="1">
    <citation type="journal article" date="2006" name="Proc. Natl. Acad. Sci. U.S.A.">
        <title>Genome reduction in Leptospira borgpetersenii reflects limited transmission potential.</title>
        <authorList>
            <person name="Bulach D.M."/>
            <person name="Zuerner R.L."/>
            <person name="Wilson P."/>
            <person name="Seemann T."/>
            <person name="McGrath A."/>
            <person name="Cullen P.A."/>
            <person name="Davis J."/>
            <person name="Johnson M."/>
            <person name="Kuczek E."/>
            <person name="Alt D.P."/>
            <person name="Peterson-Burch B."/>
            <person name="Coppel R.L."/>
            <person name="Rood J.I."/>
            <person name="Davies J.K."/>
            <person name="Adler B."/>
        </authorList>
    </citation>
    <scope>NUCLEOTIDE SEQUENCE [LARGE SCALE GENOMIC DNA]</scope>
    <source>
        <strain>JB197</strain>
    </source>
</reference>
<accession>Q04U80</accession>
<protein>
    <recommendedName>
        <fullName evidence="1">4-hydroxy-tetrahydrodipicolinate synthase</fullName>
        <shortName evidence="1">HTPA synthase</shortName>
        <ecNumber evidence="1">4.3.3.7</ecNumber>
    </recommendedName>
</protein>
<keyword id="KW-0028">Amino-acid biosynthesis</keyword>
<keyword id="KW-0963">Cytoplasm</keyword>
<keyword id="KW-0220">Diaminopimelate biosynthesis</keyword>
<keyword id="KW-0456">Lyase</keyword>
<keyword id="KW-0457">Lysine biosynthesis</keyword>
<keyword id="KW-0704">Schiff base</keyword>